<sequence>MITAVNRPAALHINLAAIKENTRQAKAHLKPGQKLFCVVKANAYGHGAARLAPVMEEAGADGFCVAMLDEGLELRRAQIVKPILVLGLQPAEESALAAANDISLPVSSLDWLKKAEKVLRKEGLQLKIHLAIDSGMGRIGFSEDEDFKAVNEYLQGNDAFFVEGMFTHFASADSADASYFDYQVKRFKHMESLLTVKPKWIHVDNTAAILFDKDVASDIVRFGIGLYGLNPSSAPGSRDLEPAFALEPAMSFVSELTYVKQIHKGYGVGYGSTHIAEEDEWIGTVPVGYADGWIRKFQGFKVKVGDTYCPIVGRVCMDQFMVLLPKEVPAGTPVELISADPAAPNSLRRAADWLDTIHYEVACQFNDRLDRIYDNE</sequence>
<name>ALR_LACDB</name>
<proteinExistence type="inferred from homology"/>
<gene>
    <name type="primary">alr</name>
    <name type="ordered locus">LBUL_0315</name>
</gene>
<comment type="function">
    <text evidence="1">Catalyzes the interconversion of L-alanine and D-alanine. May also act on other amino acids.</text>
</comment>
<comment type="catalytic activity">
    <reaction evidence="1">
        <text>L-alanine = D-alanine</text>
        <dbReference type="Rhea" id="RHEA:20249"/>
        <dbReference type="ChEBI" id="CHEBI:57416"/>
        <dbReference type="ChEBI" id="CHEBI:57972"/>
        <dbReference type="EC" id="5.1.1.1"/>
    </reaction>
</comment>
<comment type="cofactor">
    <cofactor evidence="1">
        <name>pyridoxal 5'-phosphate</name>
        <dbReference type="ChEBI" id="CHEBI:597326"/>
    </cofactor>
</comment>
<comment type="pathway">
    <text evidence="1">Amino-acid biosynthesis; D-alanine biosynthesis; D-alanine from L-alanine: step 1/1.</text>
</comment>
<comment type="similarity">
    <text evidence="1">Belongs to the alanine racemase family.</text>
</comment>
<keyword id="KW-0413">Isomerase</keyword>
<keyword id="KW-0663">Pyridoxal phosphate</keyword>
<protein>
    <recommendedName>
        <fullName evidence="1">Alanine racemase</fullName>
        <ecNumber evidence="1">5.1.1.1</ecNumber>
    </recommendedName>
</protein>
<reference key="1">
    <citation type="journal article" date="2006" name="Proc. Natl. Acad. Sci. U.S.A.">
        <title>Comparative genomics of the lactic acid bacteria.</title>
        <authorList>
            <person name="Makarova K.S."/>
            <person name="Slesarev A."/>
            <person name="Wolf Y.I."/>
            <person name="Sorokin A."/>
            <person name="Mirkin B."/>
            <person name="Koonin E.V."/>
            <person name="Pavlov A."/>
            <person name="Pavlova N."/>
            <person name="Karamychev V."/>
            <person name="Polouchine N."/>
            <person name="Shakhova V."/>
            <person name="Grigoriev I."/>
            <person name="Lou Y."/>
            <person name="Rohksar D."/>
            <person name="Lucas S."/>
            <person name="Huang K."/>
            <person name="Goodstein D.M."/>
            <person name="Hawkins T."/>
            <person name="Plengvidhya V."/>
            <person name="Welker D."/>
            <person name="Hughes J."/>
            <person name="Goh Y."/>
            <person name="Benson A."/>
            <person name="Baldwin K."/>
            <person name="Lee J.-H."/>
            <person name="Diaz-Muniz I."/>
            <person name="Dosti B."/>
            <person name="Smeianov V."/>
            <person name="Wechter W."/>
            <person name="Barabote R."/>
            <person name="Lorca G."/>
            <person name="Altermann E."/>
            <person name="Barrangou R."/>
            <person name="Ganesan B."/>
            <person name="Xie Y."/>
            <person name="Rawsthorne H."/>
            <person name="Tamir D."/>
            <person name="Parker C."/>
            <person name="Breidt F."/>
            <person name="Broadbent J.R."/>
            <person name="Hutkins R."/>
            <person name="O'Sullivan D."/>
            <person name="Steele J."/>
            <person name="Unlu G."/>
            <person name="Saier M.H. Jr."/>
            <person name="Klaenhammer T."/>
            <person name="Richardson P."/>
            <person name="Kozyavkin S."/>
            <person name="Weimer B.C."/>
            <person name="Mills D.A."/>
        </authorList>
    </citation>
    <scope>NUCLEOTIDE SEQUENCE [LARGE SCALE GENOMIC DNA]</scope>
    <source>
        <strain>ATCC BAA-365 / Lb-18</strain>
    </source>
</reference>
<evidence type="ECO:0000255" key="1">
    <source>
        <dbReference type="HAMAP-Rule" id="MF_01201"/>
    </source>
</evidence>
<feature type="chain" id="PRO_1000065999" description="Alanine racemase">
    <location>
        <begin position="1"/>
        <end position="376"/>
    </location>
</feature>
<feature type="active site" description="Proton acceptor; specific for D-alanine" evidence="1">
    <location>
        <position position="40"/>
    </location>
</feature>
<feature type="active site" description="Proton acceptor; specific for L-alanine" evidence="1">
    <location>
        <position position="270"/>
    </location>
</feature>
<feature type="binding site" evidence="1">
    <location>
        <position position="138"/>
    </location>
    <ligand>
        <name>substrate</name>
    </ligand>
</feature>
<feature type="binding site" evidence="1">
    <location>
        <position position="317"/>
    </location>
    <ligand>
        <name>substrate</name>
    </ligand>
</feature>
<feature type="modified residue" description="N6-(pyridoxal phosphate)lysine" evidence="1">
    <location>
        <position position="40"/>
    </location>
</feature>
<organism>
    <name type="scientific">Lactobacillus delbrueckii subsp. bulgaricus (strain ATCC BAA-365 / Lb-18)</name>
    <dbReference type="NCBI Taxonomy" id="321956"/>
    <lineage>
        <taxon>Bacteria</taxon>
        <taxon>Bacillati</taxon>
        <taxon>Bacillota</taxon>
        <taxon>Bacilli</taxon>
        <taxon>Lactobacillales</taxon>
        <taxon>Lactobacillaceae</taxon>
        <taxon>Lactobacillus</taxon>
    </lineage>
</organism>
<dbReference type="EC" id="5.1.1.1" evidence="1"/>
<dbReference type="EMBL" id="CP000412">
    <property type="protein sequence ID" value="ABJ57977.1"/>
    <property type="molecule type" value="Genomic_DNA"/>
</dbReference>
<dbReference type="RefSeq" id="WP_011678013.1">
    <property type="nucleotide sequence ID" value="NC_008529.1"/>
</dbReference>
<dbReference type="SMR" id="Q04C45"/>
<dbReference type="KEGG" id="lbu:LBUL_0315"/>
<dbReference type="HOGENOM" id="CLU_028393_2_1_9"/>
<dbReference type="BioCyc" id="LDEL321956:LBUL_RS01475-MONOMER"/>
<dbReference type="UniPathway" id="UPA00042">
    <property type="reaction ID" value="UER00497"/>
</dbReference>
<dbReference type="GO" id="GO:0005829">
    <property type="term" value="C:cytosol"/>
    <property type="evidence" value="ECO:0007669"/>
    <property type="project" value="TreeGrafter"/>
</dbReference>
<dbReference type="GO" id="GO:0008784">
    <property type="term" value="F:alanine racemase activity"/>
    <property type="evidence" value="ECO:0007669"/>
    <property type="project" value="UniProtKB-UniRule"/>
</dbReference>
<dbReference type="GO" id="GO:0030170">
    <property type="term" value="F:pyridoxal phosphate binding"/>
    <property type="evidence" value="ECO:0007669"/>
    <property type="project" value="UniProtKB-UniRule"/>
</dbReference>
<dbReference type="GO" id="GO:0030632">
    <property type="term" value="P:D-alanine biosynthetic process"/>
    <property type="evidence" value="ECO:0007669"/>
    <property type="project" value="UniProtKB-UniRule"/>
</dbReference>
<dbReference type="GO" id="GO:0009252">
    <property type="term" value="P:peptidoglycan biosynthetic process"/>
    <property type="evidence" value="ECO:0007669"/>
    <property type="project" value="TreeGrafter"/>
</dbReference>
<dbReference type="CDD" id="cd00430">
    <property type="entry name" value="PLPDE_III_AR"/>
    <property type="match status" value="1"/>
</dbReference>
<dbReference type="FunFam" id="3.20.20.10:FF:000002">
    <property type="entry name" value="Alanine racemase"/>
    <property type="match status" value="1"/>
</dbReference>
<dbReference type="Gene3D" id="3.20.20.10">
    <property type="entry name" value="Alanine racemase"/>
    <property type="match status" value="1"/>
</dbReference>
<dbReference type="Gene3D" id="2.40.37.10">
    <property type="entry name" value="Lyase, Ornithine Decarboxylase, Chain A, domain 1"/>
    <property type="match status" value="1"/>
</dbReference>
<dbReference type="HAMAP" id="MF_01201">
    <property type="entry name" value="Ala_racemase"/>
    <property type="match status" value="1"/>
</dbReference>
<dbReference type="InterPro" id="IPR000821">
    <property type="entry name" value="Ala_racemase"/>
</dbReference>
<dbReference type="InterPro" id="IPR009006">
    <property type="entry name" value="Ala_racemase/Decarboxylase_C"/>
</dbReference>
<dbReference type="InterPro" id="IPR011079">
    <property type="entry name" value="Ala_racemase_C"/>
</dbReference>
<dbReference type="InterPro" id="IPR001608">
    <property type="entry name" value="Ala_racemase_N"/>
</dbReference>
<dbReference type="InterPro" id="IPR020622">
    <property type="entry name" value="Ala_racemase_pyridoxalP-BS"/>
</dbReference>
<dbReference type="InterPro" id="IPR029066">
    <property type="entry name" value="PLP-binding_barrel"/>
</dbReference>
<dbReference type="NCBIfam" id="TIGR00492">
    <property type="entry name" value="alr"/>
    <property type="match status" value="1"/>
</dbReference>
<dbReference type="PANTHER" id="PTHR30511">
    <property type="entry name" value="ALANINE RACEMASE"/>
    <property type="match status" value="1"/>
</dbReference>
<dbReference type="PANTHER" id="PTHR30511:SF0">
    <property type="entry name" value="ALANINE RACEMASE, CATABOLIC-RELATED"/>
    <property type="match status" value="1"/>
</dbReference>
<dbReference type="Pfam" id="PF00842">
    <property type="entry name" value="Ala_racemase_C"/>
    <property type="match status" value="1"/>
</dbReference>
<dbReference type="Pfam" id="PF01168">
    <property type="entry name" value="Ala_racemase_N"/>
    <property type="match status" value="1"/>
</dbReference>
<dbReference type="PRINTS" id="PR00992">
    <property type="entry name" value="ALARACEMASE"/>
</dbReference>
<dbReference type="SMART" id="SM01005">
    <property type="entry name" value="Ala_racemase_C"/>
    <property type="match status" value="1"/>
</dbReference>
<dbReference type="SUPFAM" id="SSF50621">
    <property type="entry name" value="Alanine racemase C-terminal domain-like"/>
    <property type="match status" value="1"/>
</dbReference>
<dbReference type="SUPFAM" id="SSF51419">
    <property type="entry name" value="PLP-binding barrel"/>
    <property type="match status" value="1"/>
</dbReference>
<dbReference type="PROSITE" id="PS00395">
    <property type="entry name" value="ALANINE_RACEMASE"/>
    <property type="match status" value="1"/>
</dbReference>
<accession>Q04C45</accession>